<comment type="function">
    <text evidence="1">Catalytic subunit of the periplasmic nitrate reductase complex NapAB. Receives electrons from NapB and catalyzes the reduction of nitrate to nitrite.</text>
</comment>
<comment type="catalytic activity">
    <reaction evidence="1">
        <text>2 Fe(II)-[cytochrome] + nitrate + 2 H(+) = 2 Fe(III)-[cytochrome] + nitrite + H2O</text>
        <dbReference type="Rhea" id="RHEA:12909"/>
        <dbReference type="Rhea" id="RHEA-COMP:11777"/>
        <dbReference type="Rhea" id="RHEA-COMP:11778"/>
        <dbReference type="ChEBI" id="CHEBI:15377"/>
        <dbReference type="ChEBI" id="CHEBI:15378"/>
        <dbReference type="ChEBI" id="CHEBI:16301"/>
        <dbReference type="ChEBI" id="CHEBI:17632"/>
        <dbReference type="ChEBI" id="CHEBI:29033"/>
        <dbReference type="ChEBI" id="CHEBI:29034"/>
        <dbReference type="EC" id="1.9.6.1"/>
    </reaction>
</comment>
<comment type="cofactor">
    <cofactor evidence="1">
        <name>[4Fe-4S] cluster</name>
        <dbReference type="ChEBI" id="CHEBI:49883"/>
    </cofactor>
    <text evidence="1">Binds 1 [4Fe-4S] cluster.</text>
</comment>
<comment type="cofactor">
    <cofactor evidence="1">
        <name>Mo-bis(molybdopterin guanine dinucleotide)</name>
        <dbReference type="ChEBI" id="CHEBI:60539"/>
    </cofactor>
    <text evidence="1">Binds 1 molybdenum-bis(molybdopterin guanine dinucleotide) (Mo-bis-MGD) cofactor per subunit.</text>
</comment>
<comment type="subunit">
    <text evidence="1">Component of the periplasmic nitrate reductase NapAB complex composed of NapA and NapB.</text>
</comment>
<comment type="subcellular location">
    <subcellularLocation>
        <location evidence="1">Periplasm</location>
    </subcellularLocation>
</comment>
<comment type="PTM">
    <text evidence="1">Predicted to be exported by the Tat system. The position of the signal peptide cleavage has not been experimentally proven.</text>
</comment>
<comment type="similarity">
    <text evidence="1">Belongs to the prokaryotic molybdopterin-containing oxidoreductase family. NasA/NapA/NarB subfamily.</text>
</comment>
<reference key="1">
    <citation type="journal article" date="2011" name="Proc. Natl. Acad. Sci. U.S.A.">
        <title>Genomic anatomy of Escherichia coli O157:H7 outbreaks.</title>
        <authorList>
            <person name="Eppinger M."/>
            <person name="Mammel M.K."/>
            <person name="Leclerc J.E."/>
            <person name="Ravel J."/>
            <person name="Cebula T.A."/>
        </authorList>
    </citation>
    <scope>NUCLEOTIDE SEQUENCE [LARGE SCALE GENOMIC DNA]</scope>
    <source>
        <strain>EC4115 / EHEC</strain>
    </source>
</reference>
<feature type="signal peptide" description="Tat-type signal" evidence="1">
    <location>
        <begin position="1"/>
        <end position="31"/>
    </location>
</feature>
<feature type="chain" id="PRO_1000186356" description="Periplasmic nitrate reductase" evidence="1">
    <location>
        <begin position="32"/>
        <end position="828"/>
    </location>
</feature>
<feature type="domain" description="4Fe-4S Mo/W bis-MGD-type" evidence="1">
    <location>
        <begin position="39"/>
        <end position="95"/>
    </location>
</feature>
<feature type="binding site" evidence="1">
    <location>
        <position position="46"/>
    </location>
    <ligand>
        <name>[4Fe-4S] cluster</name>
        <dbReference type="ChEBI" id="CHEBI:49883"/>
    </ligand>
</feature>
<feature type="binding site" evidence="1">
    <location>
        <position position="49"/>
    </location>
    <ligand>
        <name>[4Fe-4S] cluster</name>
        <dbReference type="ChEBI" id="CHEBI:49883"/>
    </ligand>
</feature>
<feature type="binding site" evidence="1">
    <location>
        <position position="53"/>
    </location>
    <ligand>
        <name>[4Fe-4S] cluster</name>
        <dbReference type="ChEBI" id="CHEBI:49883"/>
    </ligand>
</feature>
<feature type="binding site" evidence="1">
    <location>
        <position position="81"/>
    </location>
    <ligand>
        <name>[4Fe-4S] cluster</name>
        <dbReference type="ChEBI" id="CHEBI:49883"/>
    </ligand>
</feature>
<feature type="binding site" evidence="1">
    <location>
        <position position="83"/>
    </location>
    <ligand>
        <name>Mo-bis(molybdopterin guanine dinucleotide)</name>
        <dbReference type="ChEBI" id="CHEBI:60539"/>
    </ligand>
</feature>
<feature type="binding site" evidence="1">
    <location>
        <position position="150"/>
    </location>
    <ligand>
        <name>Mo-bis(molybdopterin guanine dinucleotide)</name>
        <dbReference type="ChEBI" id="CHEBI:60539"/>
    </ligand>
</feature>
<feature type="binding site" evidence="1">
    <location>
        <position position="175"/>
    </location>
    <ligand>
        <name>Mo-bis(molybdopterin guanine dinucleotide)</name>
        <dbReference type="ChEBI" id="CHEBI:60539"/>
    </ligand>
</feature>
<feature type="binding site" evidence="1">
    <location>
        <position position="179"/>
    </location>
    <ligand>
        <name>Mo-bis(molybdopterin guanine dinucleotide)</name>
        <dbReference type="ChEBI" id="CHEBI:60539"/>
    </ligand>
</feature>
<feature type="binding site" evidence="1">
    <location>
        <begin position="212"/>
        <end position="219"/>
    </location>
    <ligand>
        <name>Mo-bis(molybdopterin guanine dinucleotide)</name>
        <dbReference type="ChEBI" id="CHEBI:60539"/>
    </ligand>
</feature>
<feature type="binding site" evidence="1">
    <location>
        <begin position="243"/>
        <end position="247"/>
    </location>
    <ligand>
        <name>Mo-bis(molybdopterin guanine dinucleotide)</name>
        <dbReference type="ChEBI" id="CHEBI:60539"/>
    </ligand>
</feature>
<feature type="binding site" evidence="1">
    <location>
        <begin position="262"/>
        <end position="264"/>
    </location>
    <ligand>
        <name>Mo-bis(molybdopterin guanine dinucleotide)</name>
        <dbReference type="ChEBI" id="CHEBI:60539"/>
    </ligand>
</feature>
<feature type="binding site" evidence="1">
    <location>
        <position position="372"/>
    </location>
    <ligand>
        <name>Mo-bis(molybdopterin guanine dinucleotide)</name>
        <dbReference type="ChEBI" id="CHEBI:60539"/>
    </ligand>
</feature>
<feature type="binding site" evidence="1">
    <location>
        <position position="376"/>
    </location>
    <ligand>
        <name>Mo-bis(molybdopterin guanine dinucleotide)</name>
        <dbReference type="ChEBI" id="CHEBI:60539"/>
    </ligand>
</feature>
<feature type="binding site" evidence="1">
    <location>
        <position position="482"/>
    </location>
    <ligand>
        <name>Mo-bis(molybdopterin guanine dinucleotide)</name>
        <dbReference type="ChEBI" id="CHEBI:60539"/>
    </ligand>
</feature>
<feature type="binding site" evidence="1">
    <location>
        <begin position="508"/>
        <end position="509"/>
    </location>
    <ligand>
        <name>Mo-bis(molybdopterin guanine dinucleotide)</name>
        <dbReference type="ChEBI" id="CHEBI:60539"/>
    </ligand>
</feature>
<feature type="binding site" evidence="1">
    <location>
        <position position="531"/>
    </location>
    <ligand>
        <name>Mo-bis(molybdopterin guanine dinucleotide)</name>
        <dbReference type="ChEBI" id="CHEBI:60539"/>
    </ligand>
</feature>
<feature type="binding site" evidence="1">
    <location>
        <position position="558"/>
    </location>
    <ligand>
        <name>Mo-bis(molybdopterin guanine dinucleotide)</name>
        <dbReference type="ChEBI" id="CHEBI:60539"/>
    </ligand>
</feature>
<feature type="binding site" evidence="1">
    <location>
        <begin position="718"/>
        <end position="727"/>
    </location>
    <ligand>
        <name>Mo-bis(molybdopterin guanine dinucleotide)</name>
        <dbReference type="ChEBI" id="CHEBI:60539"/>
    </ligand>
</feature>
<feature type="binding site" evidence="1">
    <location>
        <position position="794"/>
    </location>
    <ligand>
        <name>substrate</name>
    </ligand>
</feature>
<feature type="binding site" evidence="1">
    <location>
        <position position="802"/>
    </location>
    <ligand>
        <name>Mo-bis(molybdopterin guanine dinucleotide)</name>
        <dbReference type="ChEBI" id="CHEBI:60539"/>
    </ligand>
</feature>
<feature type="binding site" evidence="1">
    <location>
        <position position="819"/>
    </location>
    <ligand>
        <name>Mo-bis(molybdopterin guanine dinucleotide)</name>
        <dbReference type="ChEBI" id="CHEBI:60539"/>
    </ligand>
</feature>
<proteinExistence type="inferred from homology"/>
<name>NAPA_ECO5E</name>
<evidence type="ECO:0000255" key="1">
    <source>
        <dbReference type="HAMAP-Rule" id="MF_01630"/>
    </source>
</evidence>
<gene>
    <name evidence="1" type="primary">napA</name>
    <name type="ordered locus">ECH74115_3343</name>
</gene>
<accession>B5YWZ7</accession>
<sequence length="828" mass="93057">MKLSRRSFMKANAVAAAAAAAGLSVPGVARAVVGQQEAIKWDKAPCRFCGTGCGVLVGTQQGRVVACQGDPDAPVNRGLNCIKGYFLPKIMYGKDRLTQPLLRMKNGKYDKEGEFTPITWDQAFDVMEEKFKTALKEKGPESIGMFGSGQWTIWEGYAASKLFKAGFRSNNIDPNARHCMASAVVGFMRTFGMDEPMGCYDDIEQADAFVLWGANMAEMHPILWSRITNRRLSNQDVTVAVLSTYQHRSFELADNGIIFTPQSDLVILNYIANYIIQNNAINQDFFSKHVNLRKGATDIGYGLRPTHPLEKAAKNPGSDASEPMSFEDYKAFVAEYTLEKTAEMTGVPKDQLEQLAQLYADPNKKVISYWTMGFNQHTRGVWANNLVYNLHLLTGKISQPGCGPFSLTGQPSACGTAREVGTFAHRLPADMVVTNEKHRDICEKKWNIPSGTIPAKIGLHAVAQDRALKDGKLNVYWTMCTNNMQAGPNINEERMPGWRDPRNFIIVSDPYPTVSALAADLILPTAMWVEKEGAYGNAERRTQFWRQQVQAPGEAKSDLWQLVQFSRRFKTEEVWPEELLAKKPELRGKTLYEVLYATPEVSKFPVSELAEDQLNDESRELGFYLQKGLFEEYAWFGRGHGHDLAPFDDYHKARGLRWPVVNGKETQWRYSEGNDPYVKAGEGYKFYGKPDGKAVIFALPFEPAAEAPDEEYDLWLSTGRVLEHWHTGSMTRRVPELHRAFPEAVLFIHPLDAKARDLRRGDKVKVVSRRGEVISIVETRGRNRPPQGLVYMPFFDAAQLVNKLTLDATDPLSKETDFKKCAVKLEKV</sequence>
<keyword id="KW-0004">4Fe-4S</keyword>
<keyword id="KW-0249">Electron transport</keyword>
<keyword id="KW-0408">Iron</keyword>
<keyword id="KW-0411">Iron-sulfur</keyword>
<keyword id="KW-0479">Metal-binding</keyword>
<keyword id="KW-0500">Molybdenum</keyword>
<keyword id="KW-0534">Nitrate assimilation</keyword>
<keyword id="KW-0560">Oxidoreductase</keyword>
<keyword id="KW-0574">Periplasm</keyword>
<keyword id="KW-0732">Signal</keyword>
<keyword id="KW-0813">Transport</keyword>
<protein>
    <recommendedName>
        <fullName evidence="1">Periplasmic nitrate reductase</fullName>
        <ecNumber evidence="1">1.9.6.1</ecNumber>
    </recommendedName>
</protein>
<organism>
    <name type="scientific">Escherichia coli O157:H7 (strain EC4115 / EHEC)</name>
    <dbReference type="NCBI Taxonomy" id="444450"/>
    <lineage>
        <taxon>Bacteria</taxon>
        <taxon>Pseudomonadati</taxon>
        <taxon>Pseudomonadota</taxon>
        <taxon>Gammaproteobacteria</taxon>
        <taxon>Enterobacterales</taxon>
        <taxon>Enterobacteriaceae</taxon>
        <taxon>Escherichia</taxon>
    </lineage>
</organism>
<dbReference type="EC" id="1.9.6.1" evidence="1"/>
<dbReference type="EMBL" id="CP001164">
    <property type="protein sequence ID" value="ACI38621.1"/>
    <property type="molecule type" value="Genomic_DNA"/>
</dbReference>
<dbReference type="RefSeq" id="WP_000778047.1">
    <property type="nucleotide sequence ID" value="NC_011353.1"/>
</dbReference>
<dbReference type="SMR" id="B5YWZ7"/>
<dbReference type="KEGG" id="ecf:ECH74115_3343"/>
<dbReference type="HOGENOM" id="CLU_000422_13_4_6"/>
<dbReference type="GO" id="GO:0016020">
    <property type="term" value="C:membrane"/>
    <property type="evidence" value="ECO:0007669"/>
    <property type="project" value="TreeGrafter"/>
</dbReference>
<dbReference type="GO" id="GO:0009325">
    <property type="term" value="C:nitrate reductase complex"/>
    <property type="evidence" value="ECO:0007669"/>
    <property type="project" value="TreeGrafter"/>
</dbReference>
<dbReference type="GO" id="GO:0042597">
    <property type="term" value="C:periplasmic space"/>
    <property type="evidence" value="ECO:0007669"/>
    <property type="project" value="UniProtKB-SubCell"/>
</dbReference>
<dbReference type="GO" id="GO:0051539">
    <property type="term" value="F:4 iron, 4 sulfur cluster binding"/>
    <property type="evidence" value="ECO:0007669"/>
    <property type="project" value="UniProtKB-KW"/>
</dbReference>
<dbReference type="GO" id="GO:0009055">
    <property type="term" value="F:electron transfer activity"/>
    <property type="evidence" value="ECO:0007669"/>
    <property type="project" value="UniProtKB-UniRule"/>
</dbReference>
<dbReference type="GO" id="GO:0005506">
    <property type="term" value="F:iron ion binding"/>
    <property type="evidence" value="ECO:0007669"/>
    <property type="project" value="UniProtKB-UniRule"/>
</dbReference>
<dbReference type="GO" id="GO:0030151">
    <property type="term" value="F:molybdenum ion binding"/>
    <property type="evidence" value="ECO:0007669"/>
    <property type="project" value="InterPro"/>
</dbReference>
<dbReference type="GO" id="GO:0043546">
    <property type="term" value="F:molybdopterin cofactor binding"/>
    <property type="evidence" value="ECO:0007669"/>
    <property type="project" value="InterPro"/>
</dbReference>
<dbReference type="GO" id="GO:0050140">
    <property type="term" value="F:nitrate reductase (cytochrome) activity"/>
    <property type="evidence" value="ECO:0007669"/>
    <property type="project" value="UniProtKB-EC"/>
</dbReference>
<dbReference type="GO" id="GO:0045333">
    <property type="term" value="P:cellular respiration"/>
    <property type="evidence" value="ECO:0007669"/>
    <property type="project" value="UniProtKB-ARBA"/>
</dbReference>
<dbReference type="GO" id="GO:0006777">
    <property type="term" value="P:Mo-molybdopterin cofactor biosynthetic process"/>
    <property type="evidence" value="ECO:0007669"/>
    <property type="project" value="UniProtKB-UniRule"/>
</dbReference>
<dbReference type="GO" id="GO:0042128">
    <property type="term" value="P:nitrate assimilation"/>
    <property type="evidence" value="ECO:0007669"/>
    <property type="project" value="UniProtKB-UniRule"/>
</dbReference>
<dbReference type="CDD" id="cd02791">
    <property type="entry name" value="MopB_CT_Nitrate-R-NapA-like"/>
    <property type="match status" value="1"/>
</dbReference>
<dbReference type="CDD" id="cd02754">
    <property type="entry name" value="MopB_Nitrate-R-NapA-like"/>
    <property type="match status" value="1"/>
</dbReference>
<dbReference type="FunFam" id="2.40.40.20:FF:000005">
    <property type="entry name" value="Periplasmic nitrate reductase"/>
    <property type="match status" value="1"/>
</dbReference>
<dbReference type="FunFam" id="3.40.228.10:FF:000001">
    <property type="entry name" value="Periplasmic nitrate reductase"/>
    <property type="match status" value="1"/>
</dbReference>
<dbReference type="Gene3D" id="2.40.40.20">
    <property type="match status" value="1"/>
</dbReference>
<dbReference type="Gene3D" id="3.30.200.210">
    <property type="match status" value="1"/>
</dbReference>
<dbReference type="Gene3D" id="3.40.50.740">
    <property type="match status" value="1"/>
</dbReference>
<dbReference type="Gene3D" id="3.40.228.10">
    <property type="entry name" value="Dimethylsulfoxide Reductase, domain 2"/>
    <property type="match status" value="1"/>
</dbReference>
<dbReference type="HAMAP" id="MF_01630">
    <property type="entry name" value="Nitrate_reduct_NapA"/>
    <property type="match status" value="1"/>
</dbReference>
<dbReference type="InterPro" id="IPR009010">
    <property type="entry name" value="Asp_de-COase-like_dom_sf"/>
</dbReference>
<dbReference type="InterPro" id="IPR041957">
    <property type="entry name" value="CT_Nitrate-R-NapA-like"/>
</dbReference>
<dbReference type="InterPro" id="IPR006657">
    <property type="entry name" value="MoPterin_dinucl-bd_dom"/>
</dbReference>
<dbReference type="InterPro" id="IPR006656">
    <property type="entry name" value="Mopterin_OxRdtase"/>
</dbReference>
<dbReference type="InterPro" id="IPR006963">
    <property type="entry name" value="Mopterin_OxRdtase_4Fe-4S_dom"/>
</dbReference>
<dbReference type="InterPro" id="IPR027467">
    <property type="entry name" value="MopterinOxRdtase_cofactor_BS"/>
</dbReference>
<dbReference type="InterPro" id="IPR010051">
    <property type="entry name" value="Periplasm_NO3_reductase_lsu"/>
</dbReference>
<dbReference type="InterPro" id="IPR050123">
    <property type="entry name" value="Prok_molybdopt-oxidoreductase"/>
</dbReference>
<dbReference type="InterPro" id="IPR006311">
    <property type="entry name" value="TAT_signal"/>
</dbReference>
<dbReference type="InterPro" id="IPR019546">
    <property type="entry name" value="TAT_signal_bac_arc"/>
</dbReference>
<dbReference type="NCBIfam" id="TIGR01706">
    <property type="entry name" value="NAPA"/>
    <property type="match status" value="1"/>
</dbReference>
<dbReference type="NCBIfam" id="NF010055">
    <property type="entry name" value="PRK13532.1"/>
    <property type="match status" value="1"/>
</dbReference>
<dbReference type="NCBIfam" id="TIGR01409">
    <property type="entry name" value="TAT_signal_seq"/>
    <property type="match status" value="1"/>
</dbReference>
<dbReference type="PANTHER" id="PTHR43105:SF11">
    <property type="entry name" value="PERIPLASMIC NITRATE REDUCTASE"/>
    <property type="match status" value="1"/>
</dbReference>
<dbReference type="PANTHER" id="PTHR43105">
    <property type="entry name" value="RESPIRATORY NITRATE REDUCTASE"/>
    <property type="match status" value="1"/>
</dbReference>
<dbReference type="Pfam" id="PF04879">
    <property type="entry name" value="Molybdop_Fe4S4"/>
    <property type="match status" value="1"/>
</dbReference>
<dbReference type="Pfam" id="PF00384">
    <property type="entry name" value="Molybdopterin"/>
    <property type="match status" value="1"/>
</dbReference>
<dbReference type="Pfam" id="PF01568">
    <property type="entry name" value="Molydop_binding"/>
    <property type="match status" value="1"/>
</dbReference>
<dbReference type="SMART" id="SM00926">
    <property type="entry name" value="Molybdop_Fe4S4"/>
    <property type="match status" value="1"/>
</dbReference>
<dbReference type="SUPFAM" id="SSF50692">
    <property type="entry name" value="ADC-like"/>
    <property type="match status" value="1"/>
</dbReference>
<dbReference type="SUPFAM" id="SSF53706">
    <property type="entry name" value="Formate dehydrogenase/DMSO reductase, domains 1-3"/>
    <property type="match status" value="1"/>
</dbReference>
<dbReference type="PROSITE" id="PS51669">
    <property type="entry name" value="4FE4S_MOW_BIS_MGD"/>
    <property type="match status" value="1"/>
</dbReference>
<dbReference type="PROSITE" id="PS00551">
    <property type="entry name" value="MOLYBDOPTERIN_PROK_1"/>
    <property type="match status" value="1"/>
</dbReference>
<dbReference type="PROSITE" id="PS51318">
    <property type="entry name" value="TAT"/>
    <property type="match status" value="1"/>
</dbReference>